<comment type="function">
    <text evidence="1 3">Sustains mitochondrial morphology probably through maintaining cristae morphology (PubMed:21248201). May act as a component of the MICOS complex, a large protein complex of the mitochondria (By similarity).</text>
</comment>
<comment type="subunit">
    <text evidence="1">Component of the mitochondrial contact site and cristae organizing system (MICOS) complex.</text>
</comment>
<comment type="subcellular location">
    <subcellularLocation>
        <location evidence="3">Mitochondrion outer membrane</location>
        <topology evidence="2">Multi-pass membrane protein</topology>
    </subcellularLocation>
</comment>
<comment type="developmental stage">
    <text evidence="3">Expressed in embryos.</text>
</comment>
<comment type="disruption phenotype">
    <text evidence="3">Abnormal mitochondrial morphology with localized swellings and tubular extensions, and distended cristae. Double knockout with fzo-1 or eat-3 RNAi results in mitochondrial fragmentation. Double knockout with chch-3 results in reduced or no brood, poor growth and withered gonads which on a cellular level contain fewer mitochondria.</text>
</comment>
<comment type="similarity">
    <text evidence="5">Belongs to the apolipoprotein O/MICOS complex subunit Mic27 family.</text>
</comment>
<sequence length="201" mass="22082">MTQDKPIVETISNAGEQVTNVFGQFWQLVTSKNTTNNGDSKPIKIEQLPIYAEDNAPLKQKFLPEEPLPLQREFATIRIACEQEYDRVAERFKVVDCAMTQTKKAATKCNAYLTEEWTALPKAAAITVGGMAGFVLGLKRGPVGRLLTTTIGLATMAAFCYPIEAVDVAKTGRAHAEQTWYSFQESPTPSAIVKTNLSPPK</sequence>
<accession>Q21154</accession>
<proteinExistence type="evidence at transcript level"/>
<organism evidence="7">
    <name type="scientific">Caenorhabditis elegans</name>
    <dbReference type="NCBI Taxonomy" id="6239"/>
    <lineage>
        <taxon>Eukaryota</taxon>
        <taxon>Metazoa</taxon>
        <taxon>Ecdysozoa</taxon>
        <taxon>Nematoda</taxon>
        <taxon>Chromadorea</taxon>
        <taxon>Rhabditida</taxon>
        <taxon>Rhabditina</taxon>
        <taxon>Rhabditomorpha</taxon>
        <taxon>Rhabditoidea</taxon>
        <taxon>Rhabditidae</taxon>
        <taxon>Peloderinae</taxon>
        <taxon>Caenorhabditis</taxon>
    </lineage>
</organism>
<keyword id="KW-0472">Membrane</keyword>
<keyword id="KW-0496">Mitochondrion</keyword>
<keyword id="KW-1000">Mitochondrion outer membrane</keyword>
<keyword id="KW-1185">Reference proteome</keyword>
<keyword id="KW-0809">Transit peptide</keyword>
<keyword id="KW-0812">Transmembrane</keyword>
<keyword id="KW-1133">Transmembrane helix</keyword>
<protein>
    <recommendedName>
        <fullName evidence="1">MICOS complex subunit MIC27</fullName>
    </recommendedName>
    <alternativeName>
        <fullName evidence="4">Mitochondrial outer membrane abnormal protein 1</fullName>
    </alternativeName>
</protein>
<dbReference type="EMBL" id="BX284603">
    <property type="protein sequence ID" value="CCD61877.1"/>
    <property type="molecule type" value="Genomic_DNA"/>
</dbReference>
<dbReference type="PIR" id="T16534">
    <property type="entry name" value="T16534"/>
</dbReference>
<dbReference type="RefSeq" id="NP_497275.1">
    <property type="nucleotide sequence ID" value="NM_064874.6"/>
</dbReference>
<dbReference type="FunCoup" id="Q21154">
    <property type="interactions" value="437"/>
</dbReference>
<dbReference type="STRING" id="6239.K02F3.10.1"/>
<dbReference type="PaxDb" id="6239-K02F3.10"/>
<dbReference type="PeptideAtlas" id="Q21154"/>
<dbReference type="EnsemblMetazoa" id="K02F3.10.1">
    <property type="protein sequence ID" value="K02F3.10.1"/>
    <property type="gene ID" value="WBGene00019333"/>
</dbReference>
<dbReference type="GeneID" id="175243"/>
<dbReference type="KEGG" id="cel:CELE_K02F3.10"/>
<dbReference type="UCSC" id="K02F3.10">
    <property type="organism name" value="c. elegans"/>
</dbReference>
<dbReference type="AGR" id="WB:WBGene00019333"/>
<dbReference type="CTD" id="175243"/>
<dbReference type="WormBase" id="K02F3.10">
    <property type="protein sequence ID" value="CE01346"/>
    <property type="gene ID" value="WBGene00019333"/>
    <property type="gene designation" value="moma-1"/>
</dbReference>
<dbReference type="eggNOG" id="KOG4798">
    <property type="taxonomic scope" value="Eukaryota"/>
</dbReference>
<dbReference type="GeneTree" id="ENSGT00530000063666"/>
<dbReference type="HOGENOM" id="CLU_090106_0_0_1"/>
<dbReference type="InParanoid" id="Q21154"/>
<dbReference type="OMA" id="AEQTWYS"/>
<dbReference type="OrthoDB" id="5973346at2759"/>
<dbReference type="PhylomeDB" id="Q21154"/>
<dbReference type="Reactome" id="R-CEL-114608">
    <property type="pathway name" value="Platelet degranulation"/>
</dbReference>
<dbReference type="PRO" id="PR:Q21154"/>
<dbReference type="Proteomes" id="UP000001940">
    <property type="component" value="Chromosome III"/>
</dbReference>
<dbReference type="Bgee" id="WBGene00019333">
    <property type="expression patterns" value="Expressed in germ line (C elegans) and 4 other cell types or tissues"/>
</dbReference>
<dbReference type="GO" id="GO:0061617">
    <property type="term" value="C:MICOS complex"/>
    <property type="evidence" value="ECO:0000318"/>
    <property type="project" value="GO_Central"/>
</dbReference>
<dbReference type="GO" id="GO:0005741">
    <property type="term" value="C:mitochondrial outer membrane"/>
    <property type="evidence" value="ECO:0000314"/>
    <property type="project" value="WormBase"/>
</dbReference>
<dbReference type="GO" id="GO:0042407">
    <property type="term" value="P:cristae formation"/>
    <property type="evidence" value="ECO:0000318"/>
    <property type="project" value="GO_Central"/>
</dbReference>
<dbReference type="InterPro" id="IPR019166">
    <property type="entry name" value="MIC26/MIC27"/>
</dbReference>
<dbReference type="InterPro" id="IPR033182">
    <property type="entry name" value="MIC26/MIC27_animal"/>
</dbReference>
<dbReference type="PANTHER" id="PTHR14564">
    <property type="entry name" value="MICOS COMPLEX SUBUNIT MIC26 / MIC27 FAMILY MEMBER"/>
    <property type="match status" value="1"/>
</dbReference>
<dbReference type="Pfam" id="PF09769">
    <property type="entry name" value="ApoO"/>
    <property type="match status" value="1"/>
</dbReference>
<gene>
    <name evidence="4 8" type="primary">moma-1</name>
    <name evidence="8" type="ORF">K02F3.10</name>
</gene>
<feature type="transit peptide" description="Mitochondrion" evidence="2">
    <location>
        <begin position="1"/>
        <end position="31"/>
    </location>
</feature>
<feature type="chain" id="PRO_0000438527" description="MICOS complex subunit MIC27" evidence="5">
    <location>
        <begin position="32"/>
        <end position="201"/>
    </location>
</feature>
<feature type="topological domain" description="Cytoplasmic" evidence="6">
    <location>
        <begin position="32"/>
        <end position="117"/>
    </location>
</feature>
<feature type="transmembrane region" description="Helical" evidence="2">
    <location>
        <begin position="118"/>
        <end position="138"/>
    </location>
</feature>
<feature type="topological domain" description="Mitochondrial intermembrane" evidence="6">
    <location>
        <begin position="139"/>
        <end position="145"/>
    </location>
</feature>
<feature type="transmembrane region" description="Helical" evidence="2">
    <location>
        <begin position="146"/>
        <end position="166"/>
    </location>
</feature>
<feature type="topological domain" description="Cytoplasmic" evidence="6">
    <location>
        <begin position="167"/>
        <end position="201"/>
    </location>
</feature>
<evidence type="ECO:0000250" key="1">
    <source>
        <dbReference type="UniProtKB" id="Q6UXV4"/>
    </source>
</evidence>
<evidence type="ECO:0000255" key="2"/>
<evidence type="ECO:0000269" key="3">
    <source>
    </source>
</evidence>
<evidence type="ECO:0000303" key="4">
    <source>
    </source>
</evidence>
<evidence type="ECO:0000305" key="5"/>
<evidence type="ECO:0000305" key="6">
    <source>
    </source>
</evidence>
<evidence type="ECO:0000312" key="7">
    <source>
        <dbReference type="Proteomes" id="UP000001940"/>
    </source>
</evidence>
<evidence type="ECO:0000312" key="8">
    <source>
        <dbReference type="WormBase" id="K02F3.10"/>
    </source>
</evidence>
<name>MOMA1_CAEEL</name>
<reference evidence="7" key="1">
    <citation type="journal article" date="1998" name="Science">
        <title>Genome sequence of the nematode C. elegans: a platform for investigating biology.</title>
        <authorList>
            <consortium name="The C. elegans sequencing consortium"/>
        </authorList>
    </citation>
    <scope>NUCLEOTIDE SEQUENCE [LARGE SCALE GENOMIC DNA]</scope>
    <source>
        <strain evidence="7">Bristol N2</strain>
    </source>
</reference>
<reference evidence="5" key="2">
    <citation type="journal article" date="2011" name="Mol. Biol. Cell">
        <title>A novel mitochondrial outer membrane protein, MOMA-1, that affects cristae morphology in Caenorhabditis elegans.</title>
        <authorList>
            <person name="Head B.P."/>
            <person name="Zulaika M."/>
            <person name="Ryazantsev S."/>
            <person name="van der Bliek A.M."/>
        </authorList>
    </citation>
    <scope>FUNCTION</scope>
    <scope>SUBCELLULAR LOCATION</scope>
    <scope>DEVELOPMENTAL STAGE</scope>
    <scope>DISRUPTION PHENOTYPE</scope>
</reference>